<protein>
    <recommendedName>
        <fullName>Thioredoxin-T</fullName>
        <shortName>ThioredoxinT</shortName>
    </recommendedName>
</protein>
<sequence length="157" mass="17499">MVYPVRNKDDLDQQLILAEDKLVVIDFYADWCGPCKIIAPKLDELAHEYSDRVVVLKVNVDENEDITVEYNVNSMPTFVFIKGGNVLELFVGCNSDKLAKLMEKHAGVYTDEAADVKAVHIDGECIVDLTAESSESDNDNNNVNEVSAHDENAVLEH</sequence>
<reference key="1">
    <citation type="journal article" date="2003" name="Chromosoma">
        <title>The ThioredoxinT and deadhead gene pair encode testis- and ovary-specific thioredoxins in Drosophila melanogaster.</title>
        <authorList>
            <person name="Svensson M.J."/>
            <person name="Chen J.D."/>
            <person name="Pirrotta V."/>
            <person name="Larsson J."/>
        </authorList>
    </citation>
    <scope>NUCLEOTIDE SEQUENCE</scope>
    <scope>SUBCELLULAR LOCATION</scope>
    <scope>TISSUE SPECIFICITY</scope>
    <scope>DEVELOPMENTAL STAGE</scope>
    <source>
        <tissue>Testis</tissue>
    </source>
</reference>
<reference key="2">
    <citation type="journal article" date="2000" name="Science">
        <title>The genome sequence of Drosophila melanogaster.</title>
        <authorList>
            <person name="Adams M.D."/>
            <person name="Celniker S.E."/>
            <person name="Holt R.A."/>
            <person name="Evans C.A."/>
            <person name="Gocayne J.D."/>
            <person name="Amanatides P.G."/>
            <person name="Scherer S.E."/>
            <person name="Li P.W."/>
            <person name="Hoskins R.A."/>
            <person name="Galle R.F."/>
            <person name="George R.A."/>
            <person name="Lewis S.E."/>
            <person name="Richards S."/>
            <person name="Ashburner M."/>
            <person name="Henderson S.N."/>
            <person name="Sutton G.G."/>
            <person name="Wortman J.R."/>
            <person name="Yandell M.D."/>
            <person name="Zhang Q."/>
            <person name="Chen L.X."/>
            <person name="Brandon R.C."/>
            <person name="Rogers Y.-H.C."/>
            <person name="Blazej R.G."/>
            <person name="Champe M."/>
            <person name="Pfeiffer B.D."/>
            <person name="Wan K.H."/>
            <person name="Doyle C."/>
            <person name="Baxter E.G."/>
            <person name="Helt G."/>
            <person name="Nelson C.R."/>
            <person name="Miklos G.L.G."/>
            <person name="Abril J.F."/>
            <person name="Agbayani A."/>
            <person name="An H.-J."/>
            <person name="Andrews-Pfannkoch C."/>
            <person name="Baldwin D."/>
            <person name="Ballew R.M."/>
            <person name="Basu A."/>
            <person name="Baxendale J."/>
            <person name="Bayraktaroglu L."/>
            <person name="Beasley E.M."/>
            <person name="Beeson K.Y."/>
            <person name="Benos P.V."/>
            <person name="Berman B.P."/>
            <person name="Bhandari D."/>
            <person name="Bolshakov S."/>
            <person name="Borkova D."/>
            <person name="Botchan M.R."/>
            <person name="Bouck J."/>
            <person name="Brokstein P."/>
            <person name="Brottier P."/>
            <person name="Burtis K.C."/>
            <person name="Busam D.A."/>
            <person name="Butler H."/>
            <person name="Cadieu E."/>
            <person name="Center A."/>
            <person name="Chandra I."/>
            <person name="Cherry J.M."/>
            <person name="Cawley S."/>
            <person name="Dahlke C."/>
            <person name="Davenport L.B."/>
            <person name="Davies P."/>
            <person name="de Pablos B."/>
            <person name="Delcher A."/>
            <person name="Deng Z."/>
            <person name="Mays A.D."/>
            <person name="Dew I."/>
            <person name="Dietz S.M."/>
            <person name="Dodson K."/>
            <person name="Doup L.E."/>
            <person name="Downes M."/>
            <person name="Dugan-Rocha S."/>
            <person name="Dunkov B.C."/>
            <person name="Dunn P."/>
            <person name="Durbin K.J."/>
            <person name="Evangelista C.C."/>
            <person name="Ferraz C."/>
            <person name="Ferriera S."/>
            <person name="Fleischmann W."/>
            <person name="Fosler C."/>
            <person name="Gabrielian A.E."/>
            <person name="Garg N.S."/>
            <person name="Gelbart W.M."/>
            <person name="Glasser K."/>
            <person name="Glodek A."/>
            <person name="Gong F."/>
            <person name="Gorrell J.H."/>
            <person name="Gu Z."/>
            <person name="Guan P."/>
            <person name="Harris M."/>
            <person name="Harris N.L."/>
            <person name="Harvey D.A."/>
            <person name="Heiman T.J."/>
            <person name="Hernandez J.R."/>
            <person name="Houck J."/>
            <person name="Hostin D."/>
            <person name="Houston K.A."/>
            <person name="Howland T.J."/>
            <person name="Wei M.-H."/>
            <person name="Ibegwam C."/>
            <person name="Jalali M."/>
            <person name="Kalush F."/>
            <person name="Karpen G.H."/>
            <person name="Ke Z."/>
            <person name="Kennison J.A."/>
            <person name="Ketchum K.A."/>
            <person name="Kimmel B.E."/>
            <person name="Kodira C.D."/>
            <person name="Kraft C.L."/>
            <person name="Kravitz S."/>
            <person name="Kulp D."/>
            <person name="Lai Z."/>
            <person name="Lasko P."/>
            <person name="Lei Y."/>
            <person name="Levitsky A.A."/>
            <person name="Li J.H."/>
            <person name="Li Z."/>
            <person name="Liang Y."/>
            <person name="Lin X."/>
            <person name="Liu X."/>
            <person name="Mattei B."/>
            <person name="McIntosh T.C."/>
            <person name="McLeod M.P."/>
            <person name="McPherson D."/>
            <person name="Merkulov G."/>
            <person name="Milshina N.V."/>
            <person name="Mobarry C."/>
            <person name="Morris J."/>
            <person name="Moshrefi A."/>
            <person name="Mount S.M."/>
            <person name="Moy M."/>
            <person name="Murphy B."/>
            <person name="Murphy L."/>
            <person name="Muzny D.M."/>
            <person name="Nelson D.L."/>
            <person name="Nelson D.R."/>
            <person name="Nelson K.A."/>
            <person name="Nixon K."/>
            <person name="Nusskern D.R."/>
            <person name="Pacleb J.M."/>
            <person name="Palazzolo M."/>
            <person name="Pittman G.S."/>
            <person name="Pan S."/>
            <person name="Pollard J."/>
            <person name="Puri V."/>
            <person name="Reese M.G."/>
            <person name="Reinert K."/>
            <person name="Remington K."/>
            <person name="Saunders R.D.C."/>
            <person name="Scheeler F."/>
            <person name="Shen H."/>
            <person name="Shue B.C."/>
            <person name="Siden-Kiamos I."/>
            <person name="Simpson M."/>
            <person name="Skupski M.P."/>
            <person name="Smith T.J."/>
            <person name="Spier E."/>
            <person name="Spradling A.C."/>
            <person name="Stapleton M."/>
            <person name="Strong R."/>
            <person name="Sun E."/>
            <person name="Svirskas R."/>
            <person name="Tector C."/>
            <person name="Turner R."/>
            <person name="Venter E."/>
            <person name="Wang A.H."/>
            <person name="Wang X."/>
            <person name="Wang Z.-Y."/>
            <person name="Wassarman D.A."/>
            <person name="Weinstock G.M."/>
            <person name="Weissenbach J."/>
            <person name="Williams S.M."/>
            <person name="Woodage T."/>
            <person name="Worley K.C."/>
            <person name="Wu D."/>
            <person name="Yang S."/>
            <person name="Yao Q.A."/>
            <person name="Ye J."/>
            <person name="Yeh R.-F."/>
            <person name="Zaveri J.S."/>
            <person name="Zhan M."/>
            <person name="Zhang G."/>
            <person name="Zhao Q."/>
            <person name="Zheng L."/>
            <person name="Zheng X.H."/>
            <person name="Zhong F.N."/>
            <person name="Zhong W."/>
            <person name="Zhou X."/>
            <person name="Zhu S.C."/>
            <person name="Zhu X."/>
            <person name="Smith H.O."/>
            <person name="Gibbs R.A."/>
            <person name="Myers E.W."/>
            <person name="Rubin G.M."/>
            <person name="Venter J.C."/>
        </authorList>
    </citation>
    <scope>NUCLEOTIDE SEQUENCE [LARGE SCALE GENOMIC DNA]</scope>
    <source>
        <strain>Berkeley</strain>
    </source>
</reference>
<reference key="3">
    <citation type="journal article" date="2002" name="Genome Biol.">
        <title>Annotation of the Drosophila melanogaster euchromatic genome: a systematic review.</title>
        <authorList>
            <person name="Misra S."/>
            <person name="Crosby M.A."/>
            <person name="Mungall C.J."/>
            <person name="Matthews B.B."/>
            <person name="Campbell K.S."/>
            <person name="Hradecky P."/>
            <person name="Huang Y."/>
            <person name="Kaminker J.S."/>
            <person name="Millburn G.H."/>
            <person name="Prochnik S.E."/>
            <person name="Smith C.D."/>
            <person name="Tupy J.L."/>
            <person name="Whitfield E.J."/>
            <person name="Bayraktaroglu L."/>
            <person name="Berman B.P."/>
            <person name="Bettencourt B.R."/>
            <person name="Celniker S.E."/>
            <person name="de Grey A.D.N.J."/>
            <person name="Drysdale R.A."/>
            <person name="Harris N.L."/>
            <person name="Richter J."/>
            <person name="Russo S."/>
            <person name="Schroeder A.J."/>
            <person name="Shu S.Q."/>
            <person name="Stapleton M."/>
            <person name="Yamada C."/>
            <person name="Ashburner M."/>
            <person name="Gelbart W.M."/>
            <person name="Rubin G.M."/>
            <person name="Lewis S.E."/>
        </authorList>
    </citation>
    <scope>GENOME REANNOTATION</scope>
    <source>
        <strain>Berkeley</strain>
    </source>
</reference>
<comment type="function">
    <text>Probably participates in various redox reactions through the reversible oxidation of its active center dithiol to a disulfide and catalyzes dithiol-disulfide exchange reactions. Its tissue specificity suggests a regulatory role in the germline.</text>
</comment>
<comment type="subcellular location">
    <subcellularLocation>
        <location evidence="3">Nucleus</location>
    </subcellularLocation>
    <subcellularLocation>
        <location evidence="3">Chromosome</location>
    </subcellularLocation>
    <text>Specifically associated with the Y chromosome loops.</text>
</comment>
<comment type="tissue specificity">
    <text evidence="3">Testis specific. Not expressed in the embryo. Becomes progressively more strongly expressed during larval and pupal development. In testis, it is strongly expressed in young spermatocytes, and postmeiotic spermatid stages, then expression decreases at the nuclear elongation stage. Strongly expressed in the waste bag, in which material no longer needed for the mature sperm is eliminated. Not expressed in the stem cells and spermatogonial cells.</text>
</comment>
<comment type="developmental stage">
    <text evidence="3">Not expressed maternally.</text>
</comment>
<comment type="miscellaneous">
    <text>The TrxT gene, which encodes an testis specific thioredoxin, is adjacent to the dhd gene and shares some regulatory region with it.</text>
</comment>
<comment type="similarity">
    <text evidence="4">Belongs to the thioredoxin family.</text>
</comment>
<keyword id="KW-0002">3D-structure</keyword>
<keyword id="KW-0158">Chromosome</keyword>
<keyword id="KW-1015">Disulfide bond</keyword>
<keyword id="KW-0249">Electron transport</keyword>
<keyword id="KW-0539">Nucleus</keyword>
<keyword id="KW-0676">Redox-active center</keyword>
<keyword id="KW-1185">Reference proteome</keyword>
<keyword id="KW-0813">Transport</keyword>
<feature type="chain" id="PRO_0000120036" description="Thioredoxin-T">
    <location>
        <begin position="1"/>
        <end position="157"/>
    </location>
</feature>
<feature type="domain" description="Thioredoxin" evidence="1">
    <location>
        <begin position="2"/>
        <end position="107"/>
    </location>
</feature>
<feature type="region of interest" description="Disordered" evidence="2">
    <location>
        <begin position="132"/>
        <end position="157"/>
    </location>
</feature>
<feature type="compositionally biased region" description="Basic and acidic residues" evidence="2">
    <location>
        <begin position="147"/>
        <end position="157"/>
    </location>
</feature>
<feature type="disulfide bond" description="Redox-active" evidence="1">
    <location>
        <begin position="32"/>
        <end position="35"/>
    </location>
</feature>
<feature type="sequence conflict" description="In Ref. 2; AAF46018." evidence="4" ref="2">
    <original>HE</original>
    <variation>QQ</variation>
    <location>
        <begin position="47"/>
        <end position="48"/>
    </location>
</feature>
<feature type="helix" evidence="5">
    <location>
        <begin position="8"/>
        <end position="17"/>
    </location>
</feature>
<feature type="turn" evidence="5">
    <location>
        <begin position="18"/>
        <end position="20"/>
    </location>
</feature>
<feature type="strand" evidence="5">
    <location>
        <begin position="21"/>
        <end position="28"/>
    </location>
</feature>
<feature type="helix" evidence="5">
    <location>
        <begin position="33"/>
        <end position="48"/>
    </location>
</feature>
<feature type="turn" evidence="5">
    <location>
        <begin position="49"/>
        <end position="52"/>
    </location>
</feature>
<feature type="strand" evidence="5">
    <location>
        <begin position="53"/>
        <end position="59"/>
    </location>
</feature>
<feature type="turn" evidence="5">
    <location>
        <begin position="60"/>
        <end position="62"/>
    </location>
</feature>
<feature type="helix" evidence="5">
    <location>
        <begin position="64"/>
        <end position="69"/>
    </location>
</feature>
<feature type="strand" evidence="5">
    <location>
        <begin position="74"/>
        <end position="82"/>
    </location>
</feature>
<feature type="strand" evidence="5">
    <location>
        <begin position="85"/>
        <end position="92"/>
    </location>
</feature>
<feature type="helix" evidence="5">
    <location>
        <begin position="95"/>
        <end position="104"/>
    </location>
</feature>
<organism>
    <name type="scientific">Drosophila melanogaster</name>
    <name type="common">Fruit fly</name>
    <dbReference type="NCBI Taxonomy" id="7227"/>
    <lineage>
        <taxon>Eukaryota</taxon>
        <taxon>Metazoa</taxon>
        <taxon>Ecdysozoa</taxon>
        <taxon>Arthropoda</taxon>
        <taxon>Hexapoda</taxon>
        <taxon>Insecta</taxon>
        <taxon>Pterygota</taxon>
        <taxon>Neoptera</taxon>
        <taxon>Endopterygota</taxon>
        <taxon>Diptera</taxon>
        <taxon>Brachycera</taxon>
        <taxon>Muscomorpha</taxon>
        <taxon>Ephydroidea</taxon>
        <taxon>Drosophilidae</taxon>
        <taxon>Drosophila</taxon>
        <taxon>Sophophora</taxon>
    </lineage>
</organism>
<evidence type="ECO:0000255" key="1">
    <source>
        <dbReference type="PROSITE-ProRule" id="PRU00691"/>
    </source>
</evidence>
<evidence type="ECO:0000256" key="2">
    <source>
        <dbReference type="SAM" id="MobiDB-lite"/>
    </source>
</evidence>
<evidence type="ECO:0000269" key="3">
    <source>
    </source>
</evidence>
<evidence type="ECO:0000305" key="4"/>
<evidence type="ECO:0007829" key="5">
    <source>
        <dbReference type="PDB" id="6Z7O"/>
    </source>
</evidence>
<dbReference type="EMBL" id="AJ507731">
    <property type="protein sequence ID" value="CAD45644.1"/>
    <property type="molecule type" value="mRNA"/>
</dbReference>
<dbReference type="EMBL" id="AE014298">
    <property type="protein sequence ID" value="AAF46018.2"/>
    <property type="molecule type" value="Genomic_DNA"/>
</dbReference>
<dbReference type="RefSeq" id="NP_001284881.1">
    <property type="nucleotide sequence ID" value="NM_001297952.1"/>
</dbReference>
<dbReference type="RefSeq" id="NP_572212.1">
    <property type="nucleotide sequence ID" value="NM_131984.1"/>
</dbReference>
<dbReference type="PDB" id="6Z7O">
    <property type="method" value="X-ray"/>
    <property type="resolution" value="2.33 A"/>
    <property type="chains" value="A=1-157"/>
</dbReference>
<dbReference type="PDBsum" id="6Z7O"/>
<dbReference type="SMR" id="Q8IFW4"/>
<dbReference type="BioGRID" id="57953">
    <property type="interactions" value="16"/>
</dbReference>
<dbReference type="FunCoup" id="Q8IFW4">
    <property type="interactions" value="870"/>
</dbReference>
<dbReference type="IntAct" id="Q8IFW4">
    <property type="interactions" value="18"/>
</dbReference>
<dbReference type="STRING" id="7227.FBpp0070722"/>
<dbReference type="PaxDb" id="7227-FBpp0070722"/>
<dbReference type="DNASU" id="31443"/>
<dbReference type="GeneID" id="31443"/>
<dbReference type="KEGG" id="dme:Dmel_CG3315"/>
<dbReference type="AGR" id="FB:FBgn0029752"/>
<dbReference type="CTD" id="31443"/>
<dbReference type="FlyBase" id="FBgn0029752">
    <property type="gene designation" value="TrxT"/>
</dbReference>
<dbReference type="VEuPathDB" id="VectorBase:FBgn0029752"/>
<dbReference type="eggNOG" id="KOG0907">
    <property type="taxonomic scope" value="Eukaryota"/>
</dbReference>
<dbReference type="HOGENOM" id="CLU_090389_7_0_1"/>
<dbReference type="InParanoid" id="Q8IFW4"/>
<dbReference type="OrthoDB" id="2121326at2759"/>
<dbReference type="PhylomeDB" id="Q8IFW4"/>
<dbReference type="BioGRID-ORCS" id="31443">
    <property type="hits" value="0 hits in 3 CRISPR screens"/>
</dbReference>
<dbReference type="ChiTaRS" id="TrxT">
    <property type="organism name" value="fly"/>
</dbReference>
<dbReference type="GenomeRNAi" id="31443"/>
<dbReference type="PRO" id="PR:Q8IFW4"/>
<dbReference type="Proteomes" id="UP000000803">
    <property type="component" value="Chromosome X"/>
</dbReference>
<dbReference type="ExpressionAtlas" id="Q8IFW4">
    <property type="expression patterns" value="baseline and differential"/>
</dbReference>
<dbReference type="GO" id="GO:0005829">
    <property type="term" value="C:cytosol"/>
    <property type="evidence" value="ECO:0000255"/>
    <property type="project" value="FlyBase"/>
</dbReference>
<dbReference type="GO" id="GO:0005634">
    <property type="term" value="C:nucleus"/>
    <property type="evidence" value="ECO:0007669"/>
    <property type="project" value="UniProtKB-SubCell"/>
</dbReference>
<dbReference type="GO" id="GO:0000806">
    <property type="term" value="C:Y chromosome"/>
    <property type="evidence" value="ECO:0000314"/>
    <property type="project" value="UniProtKB"/>
</dbReference>
<dbReference type="GO" id="GO:0015035">
    <property type="term" value="F:protein-disulfide reductase activity"/>
    <property type="evidence" value="ECO:0000250"/>
    <property type="project" value="FlyBase"/>
</dbReference>
<dbReference type="GO" id="GO:0006457">
    <property type="term" value="P:protein folding"/>
    <property type="evidence" value="ECO:0000314"/>
    <property type="project" value="FlyBase"/>
</dbReference>
<dbReference type="CDD" id="cd02947">
    <property type="entry name" value="TRX_family"/>
    <property type="match status" value="1"/>
</dbReference>
<dbReference type="FunFam" id="3.40.30.10:FF:000104">
    <property type="entry name" value="Thioredoxin"/>
    <property type="match status" value="1"/>
</dbReference>
<dbReference type="Gene3D" id="3.40.30.10">
    <property type="entry name" value="Glutaredoxin"/>
    <property type="match status" value="1"/>
</dbReference>
<dbReference type="InterPro" id="IPR005746">
    <property type="entry name" value="Thioredoxin"/>
</dbReference>
<dbReference type="InterPro" id="IPR036249">
    <property type="entry name" value="Thioredoxin-like_sf"/>
</dbReference>
<dbReference type="InterPro" id="IPR017937">
    <property type="entry name" value="Thioredoxin_CS"/>
</dbReference>
<dbReference type="InterPro" id="IPR013766">
    <property type="entry name" value="Thioredoxin_domain"/>
</dbReference>
<dbReference type="NCBIfam" id="TIGR01068">
    <property type="entry name" value="thioredoxin"/>
    <property type="match status" value="1"/>
</dbReference>
<dbReference type="PANTHER" id="PTHR46115">
    <property type="entry name" value="THIOREDOXIN-LIKE PROTEIN 1"/>
    <property type="match status" value="1"/>
</dbReference>
<dbReference type="Pfam" id="PF00085">
    <property type="entry name" value="Thioredoxin"/>
    <property type="match status" value="1"/>
</dbReference>
<dbReference type="PRINTS" id="PR00421">
    <property type="entry name" value="THIOREDOXIN"/>
</dbReference>
<dbReference type="SUPFAM" id="SSF52833">
    <property type="entry name" value="Thioredoxin-like"/>
    <property type="match status" value="1"/>
</dbReference>
<dbReference type="PROSITE" id="PS00194">
    <property type="entry name" value="THIOREDOXIN_1"/>
    <property type="match status" value="1"/>
</dbReference>
<dbReference type="PROSITE" id="PS51352">
    <property type="entry name" value="THIOREDOXIN_2"/>
    <property type="match status" value="1"/>
</dbReference>
<gene>
    <name type="primary">TrxT</name>
    <name type="ORF">CG3315</name>
</gene>
<name>THIOT_DROME</name>
<accession>Q8IFW4</accession>
<accession>Q9W4D6</accession>
<proteinExistence type="evidence at protein level"/>